<protein>
    <recommendedName>
        <fullName evidence="1">Phosphoglucosamine mutase</fullName>
        <ecNumber evidence="1">5.4.2.10</ecNumber>
    </recommendedName>
</protein>
<proteinExistence type="inferred from homology"/>
<dbReference type="EC" id="5.4.2.10" evidence="1"/>
<dbReference type="EMBL" id="CP000382">
    <property type="protein sequence ID" value="ABK61023.1"/>
    <property type="molecule type" value="Genomic_DNA"/>
</dbReference>
<dbReference type="RefSeq" id="WP_011721256.1">
    <property type="nucleotide sequence ID" value="NC_008593.1"/>
</dbReference>
<dbReference type="SMR" id="A0PXZ6"/>
<dbReference type="STRING" id="386415.NT01CX_1165"/>
<dbReference type="KEGG" id="cno:NT01CX_1165"/>
<dbReference type="eggNOG" id="COG1109">
    <property type="taxonomic scope" value="Bacteria"/>
</dbReference>
<dbReference type="HOGENOM" id="CLU_016950_7_0_9"/>
<dbReference type="Proteomes" id="UP000008220">
    <property type="component" value="Chromosome"/>
</dbReference>
<dbReference type="GO" id="GO:0005829">
    <property type="term" value="C:cytosol"/>
    <property type="evidence" value="ECO:0007669"/>
    <property type="project" value="TreeGrafter"/>
</dbReference>
<dbReference type="GO" id="GO:0000287">
    <property type="term" value="F:magnesium ion binding"/>
    <property type="evidence" value="ECO:0007669"/>
    <property type="project" value="UniProtKB-UniRule"/>
</dbReference>
<dbReference type="GO" id="GO:0008966">
    <property type="term" value="F:phosphoglucosamine mutase activity"/>
    <property type="evidence" value="ECO:0007669"/>
    <property type="project" value="UniProtKB-UniRule"/>
</dbReference>
<dbReference type="GO" id="GO:0004615">
    <property type="term" value="F:phosphomannomutase activity"/>
    <property type="evidence" value="ECO:0007669"/>
    <property type="project" value="TreeGrafter"/>
</dbReference>
<dbReference type="GO" id="GO:0005975">
    <property type="term" value="P:carbohydrate metabolic process"/>
    <property type="evidence" value="ECO:0007669"/>
    <property type="project" value="InterPro"/>
</dbReference>
<dbReference type="GO" id="GO:0009252">
    <property type="term" value="P:peptidoglycan biosynthetic process"/>
    <property type="evidence" value="ECO:0007669"/>
    <property type="project" value="TreeGrafter"/>
</dbReference>
<dbReference type="GO" id="GO:0006048">
    <property type="term" value="P:UDP-N-acetylglucosamine biosynthetic process"/>
    <property type="evidence" value="ECO:0007669"/>
    <property type="project" value="TreeGrafter"/>
</dbReference>
<dbReference type="CDD" id="cd05802">
    <property type="entry name" value="GlmM"/>
    <property type="match status" value="1"/>
</dbReference>
<dbReference type="FunFam" id="3.30.310.50:FF:000001">
    <property type="entry name" value="Phosphoglucosamine mutase"/>
    <property type="match status" value="1"/>
</dbReference>
<dbReference type="FunFam" id="3.40.120.10:FF:000001">
    <property type="entry name" value="Phosphoglucosamine mutase"/>
    <property type="match status" value="1"/>
</dbReference>
<dbReference type="FunFam" id="3.40.120.10:FF:000002">
    <property type="entry name" value="Phosphoglucosamine mutase"/>
    <property type="match status" value="1"/>
</dbReference>
<dbReference type="Gene3D" id="3.40.120.10">
    <property type="entry name" value="Alpha-D-Glucose-1,6-Bisphosphate, subunit A, domain 3"/>
    <property type="match status" value="3"/>
</dbReference>
<dbReference type="Gene3D" id="3.30.310.50">
    <property type="entry name" value="Alpha-D-phosphohexomutase, C-terminal domain"/>
    <property type="match status" value="1"/>
</dbReference>
<dbReference type="HAMAP" id="MF_01554_B">
    <property type="entry name" value="GlmM_B"/>
    <property type="match status" value="1"/>
</dbReference>
<dbReference type="InterPro" id="IPR005844">
    <property type="entry name" value="A-D-PHexomutase_a/b/a-I"/>
</dbReference>
<dbReference type="InterPro" id="IPR016055">
    <property type="entry name" value="A-D-PHexomutase_a/b/a-I/II/III"/>
</dbReference>
<dbReference type="InterPro" id="IPR005845">
    <property type="entry name" value="A-D-PHexomutase_a/b/a-II"/>
</dbReference>
<dbReference type="InterPro" id="IPR005846">
    <property type="entry name" value="A-D-PHexomutase_a/b/a-III"/>
</dbReference>
<dbReference type="InterPro" id="IPR005843">
    <property type="entry name" value="A-D-PHexomutase_C"/>
</dbReference>
<dbReference type="InterPro" id="IPR036900">
    <property type="entry name" value="A-D-PHexomutase_C_sf"/>
</dbReference>
<dbReference type="InterPro" id="IPR016066">
    <property type="entry name" value="A-D-PHexomutase_CS"/>
</dbReference>
<dbReference type="InterPro" id="IPR005841">
    <property type="entry name" value="Alpha-D-phosphohexomutase_SF"/>
</dbReference>
<dbReference type="InterPro" id="IPR006352">
    <property type="entry name" value="GlmM_bact"/>
</dbReference>
<dbReference type="InterPro" id="IPR050060">
    <property type="entry name" value="Phosphoglucosamine_mutase"/>
</dbReference>
<dbReference type="NCBIfam" id="TIGR01455">
    <property type="entry name" value="glmM"/>
    <property type="match status" value="1"/>
</dbReference>
<dbReference type="NCBIfam" id="NF008139">
    <property type="entry name" value="PRK10887.1"/>
    <property type="match status" value="1"/>
</dbReference>
<dbReference type="PANTHER" id="PTHR42946:SF1">
    <property type="entry name" value="PHOSPHOGLUCOMUTASE (ALPHA-D-GLUCOSE-1,6-BISPHOSPHATE-DEPENDENT)"/>
    <property type="match status" value="1"/>
</dbReference>
<dbReference type="PANTHER" id="PTHR42946">
    <property type="entry name" value="PHOSPHOHEXOSE MUTASE"/>
    <property type="match status" value="1"/>
</dbReference>
<dbReference type="Pfam" id="PF02878">
    <property type="entry name" value="PGM_PMM_I"/>
    <property type="match status" value="1"/>
</dbReference>
<dbReference type="Pfam" id="PF02879">
    <property type="entry name" value="PGM_PMM_II"/>
    <property type="match status" value="1"/>
</dbReference>
<dbReference type="Pfam" id="PF02880">
    <property type="entry name" value="PGM_PMM_III"/>
    <property type="match status" value="1"/>
</dbReference>
<dbReference type="Pfam" id="PF00408">
    <property type="entry name" value="PGM_PMM_IV"/>
    <property type="match status" value="1"/>
</dbReference>
<dbReference type="PRINTS" id="PR00509">
    <property type="entry name" value="PGMPMM"/>
</dbReference>
<dbReference type="SUPFAM" id="SSF55957">
    <property type="entry name" value="Phosphoglucomutase, C-terminal domain"/>
    <property type="match status" value="1"/>
</dbReference>
<dbReference type="SUPFAM" id="SSF53738">
    <property type="entry name" value="Phosphoglucomutase, first 3 domains"/>
    <property type="match status" value="3"/>
</dbReference>
<dbReference type="PROSITE" id="PS00710">
    <property type="entry name" value="PGM_PMM"/>
    <property type="match status" value="1"/>
</dbReference>
<organism>
    <name type="scientific">Clostridium novyi (strain NT)</name>
    <dbReference type="NCBI Taxonomy" id="386415"/>
    <lineage>
        <taxon>Bacteria</taxon>
        <taxon>Bacillati</taxon>
        <taxon>Bacillota</taxon>
        <taxon>Clostridia</taxon>
        <taxon>Eubacteriales</taxon>
        <taxon>Clostridiaceae</taxon>
        <taxon>Clostridium</taxon>
    </lineage>
</organism>
<evidence type="ECO:0000255" key="1">
    <source>
        <dbReference type="HAMAP-Rule" id="MF_01554"/>
    </source>
</evidence>
<sequence length="449" mass="48486">MGRLFGTDGVRGVANTELTADLAFKLGRAGAFVLTEGTHKPKILVGMDTRISGDMLEAALVAGILSVGAEAICVGVVPTPAIAYLTRKYKADAGVVISASHNPVEYNGIKFFNKNGYKLKDELEDRIQSIIENNFEGVPSPTGENLGRKITCESAIDDYVEFAKSTIDVDLKGLKIALDCANGASYKTSVETFRELGAEVVVINNDPDGVNINKNCGSTHPEELMDYVVKQGCDLGLAFDGDADRCLAVDEKGNLIDGDFIMTICGKHLKDQGKLKDNMVVVTVMSNLGLSLAFDKENISTIKTKVGDRYVLEEMVKDGYKLGGEQSGHIIFLDYNTTGDGLVTGLQIASIVKETGKTLSELASIMTKLPQVLVNAKVPNNMKDIHEKDAEIAEEIKKIEEKLNGCGRVLIRPSGTEPLVRVMLEGENQEELDKIAHALAKMIEEKANA</sequence>
<feature type="chain" id="PRO_0000301301" description="Phosphoglucosamine mutase">
    <location>
        <begin position="1"/>
        <end position="449"/>
    </location>
</feature>
<feature type="active site" description="Phosphoserine intermediate" evidence="1">
    <location>
        <position position="100"/>
    </location>
</feature>
<feature type="binding site" description="via phosphate group" evidence="1">
    <location>
        <position position="100"/>
    </location>
    <ligand>
        <name>Mg(2+)</name>
        <dbReference type="ChEBI" id="CHEBI:18420"/>
    </ligand>
</feature>
<feature type="binding site" evidence="1">
    <location>
        <position position="240"/>
    </location>
    <ligand>
        <name>Mg(2+)</name>
        <dbReference type="ChEBI" id="CHEBI:18420"/>
    </ligand>
</feature>
<feature type="binding site" evidence="1">
    <location>
        <position position="242"/>
    </location>
    <ligand>
        <name>Mg(2+)</name>
        <dbReference type="ChEBI" id="CHEBI:18420"/>
    </ligand>
</feature>
<feature type="binding site" evidence="1">
    <location>
        <position position="244"/>
    </location>
    <ligand>
        <name>Mg(2+)</name>
        <dbReference type="ChEBI" id="CHEBI:18420"/>
    </ligand>
</feature>
<feature type="modified residue" description="Phosphoserine" evidence="1">
    <location>
        <position position="100"/>
    </location>
</feature>
<comment type="function">
    <text evidence="1">Catalyzes the conversion of glucosamine-6-phosphate to glucosamine-1-phosphate.</text>
</comment>
<comment type="catalytic activity">
    <reaction evidence="1">
        <text>alpha-D-glucosamine 1-phosphate = D-glucosamine 6-phosphate</text>
        <dbReference type="Rhea" id="RHEA:23424"/>
        <dbReference type="ChEBI" id="CHEBI:58516"/>
        <dbReference type="ChEBI" id="CHEBI:58725"/>
        <dbReference type="EC" id="5.4.2.10"/>
    </reaction>
</comment>
<comment type="cofactor">
    <cofactor evidence="1">
        <name>Mg(2+)</name>
        <dbReference type="ChEBI" id="CHEBI:18420"/>
    </cofactor>
    <text evidence="1">Binds 1 Mg(2+) ion per subunit.</text>
</comment>
<comment type="PTM">
    <text evidence="1">Activated by phosphorylation.</text>
</comment>
<comment type="similarity">
    <text evidence="1">Belongs to the phosphohexose mutase family.</text>
</comment>
<gene>
    <name evidence="1" type="primary">glmM</name>
    <name type="ordered locus">NT01CX_1165</name>
</gene>
<keyword id="KW-0413">Isomerase</keyword>
<keyword id="KW-0460">Magnesium</keyword>
<keyword id="KW-0479">Metal-binding</keyword>
<keyword id="KW-0597">Phosphoprotein</keyword>
<keyword id="KW-1185">Reference proteome</keyword>
<name>GLMM_CLONN</name>
<accession>A0PXZ6</accession>
<reference key="1">
    <citation type="journal article" date="2006" name="Nat. Biotechnol.">
        <title>The genome and transcriptomes of the anti-tumor agent Clostridium novyi-NT.</title>
        <authorList>
            <person name="Bettegowda C."/>
            <person name="Huang X."/>
            <person name="Lin J."/>
            <person name="Cheong I."/>
            <person name="Kohli M."/>
            <person name="Szabo S.A."/>
            <person name="Zhang X."/>
            <person name="Diaz L.A. Jr."/>
            <person name="Velculescu V.E."/>
            <person name="Parmigiani G."/>
            <person name="Kinzler K.W."/>
            <person name="Vogelstein B."/>
            <person name="Zhou S."/>
        </authorList>
    </citation>
    <scope>NUCLEOTIDE SEQUENCE [LARGE SCALE GENOMIC DNA]</scope>
    <source>
        <strain>NT</strain>
    </source>
</reference>